<comment type="subunit">
    <text evidence="3 4">Heterodimer with Vangl2. Interacts through its C-terminal region with the N-terminal half of DVL1, DVL2 and DVL3. The PDZ domain of DVL1, DVL2 and DVL3 is required for the interaction.</text>
</comment>
<comment type="interaction">
    <interactant intactId="EBI-1750708">
        <id>Q80Z96</id>
    </interactant>
    <interactant intactId="EBI-1538407">
        <id>P51141</id>
        <label>Dvl1</label>
    </interactant>
    <organismsDiffer>false</organismsDiffer>
    <experiments>2</experiments>
</comment>
<comment type="interaction">
    <interactant intactId="EBI-1750708">
        <id>Q80Z96</id>
    </interactant>
    <interactant intactId="EBI-641940">
        <id>Q60838</id>
        <label>Dvl2</label>
    </interactant>
    <organismsDiffer>false</organismsDiffer>
    <experiments>4</experiments>
</comment>
<comment type="interaction">
    <interactant intactId="EBI-1750708">
        <id>Q80Z96</id>
    </interactant>
    <interactant intactId="EBI-1538450">
        <id>Q61062</id>
        <label>Dvl3</label>
    </interactant>
    <organismsDiffer>false</organismsDiffer>
    <experiments>2</experiments>
</comment>
<comment type="interaction">
    <interactant intactId="EBI-1750708">
        <id>Q80Z96</id>
    </interactant>
    <interactant intactId="EBI-375655">
        <id>P31016</id>
        <label>Dlg4</label>
    </interactant>
    <organismsDiffer>true</organismsDiffer>
    <experiments>4</experiments>
</comment>
<comment type="subcellular location">
    <subcellularLocation>
        <location evidence="4">Cell membrane</location>
        <topology evidence="4">Multi-pass membrane protein</topology>
    </subcellularLocation>
</comment>
<comment type="similarity">
    <text evidence="5">Belongs to the Vang family.</text>
</comment>
<evidence type="ECO:0000255" key="1"/>
<evidence type="ECO:0000256" key="2">
    <source>
        <dbReference type="SAM" id="MobiDB-lite"/>
    </source>
</evidence>
<evidence type="ECO:0000269" key="3">
    <source>
    </source>
</evidence>
<evidence type="ECO:0000269" key="4">
    <source>
    </source>
</evidence>
<evidence type="ECO:0000305" key="5"/>
<evidence type="ECO:0007744" key="6">
    <source>
    </source>
</evidence>
<accession>Q80Z96</accession>
<accession>B2RRP5</accession>
<accession>Q8QZT3</accession>
<protein>
    <recommendedName>
        <fullName>Vang-like protein 1</fullName>
    </recommendedName>
    <alternativeName>
        <fullName>Loop-tail protein 2</fullName>
    </alternativeName>
    <alternativeName>
        <fullName>Van Gogh-like protein 1</fullName>
    </alternativeName>
</protein>
<proteinExistence type="evidence at protein level"/>
<gene>
    <name type="primary">Vangl1</name>
    <name type="synonym">Lpp2</name>
</gene>
<keyword id="KW-1003">Cell membrane</keyword>
<keyword id="KW-0472">Membrane</keyword>
<keyword id="KW-0597">Phosphoprotein</keyword>
<keyword id="KW-1185">Reference proteome</keyword>
<keyword id="KW-0812">Transmembrane</keyword>
<keyword id="KW-1133">Transmembrane helix</keyword>
<feature type="chain" id="PRO_0000186194" description="Vang-like protein 1">
    <location>
        <begin position="1"/>
        <end position="526"/>
    </location>
</feature>
<feature type="topological domain" description="Cytoplasmic" evidence="1">
    <location>
        <begin position="1"/>
        <end position="114"/>
    </location>
</feature>
<feature type="transmembrane region" description="Helical; Name=1" evidence="1">
    <location>
        <begin position="115"/>
        <end position="135"/>
    </location>
</feature>
<feature type="topological domain" description="Extracellular" evidence="1">
    <location>
        <begin position="136"/>
        <end position="153"/>
    </location>
</feature>
<feature type="transmembrane region" description="Helical; Name=2" evidence="1">
    <location>
        <begin position="154"/>
        <end position="174"/>
    </location>
</feature>
<feature type="topological domain" description="Cytoplasmic" evidence="1">
    <location>
        <begin position="175"/>
        <end position="184"/>
    </location>
</feature>
<feature type="transmembrane region" description="Helical; Name=3" evidence="1">
    <location>
        <begin position="185"/>
        <end position="205"/>
    </location>
</feature>
<feature type="topological domain" description="Extracellular" evidence="1">
    <location>
        <begin position="206"/>
        <end position="224"/>
    </location>
</feature>
<feature type="transmembrane region" description="Helical; Name=4" evidence="1">
    <location>
        <begin position="225"/>
        <end position="245"/>
    </location>
</feature>
<feature type="topological domain" description="Cytoplasmic" evidence="1">
    <location>
        <begin position="246"/>
        <end position="526"/>
    </location>
</feature>
<feature type="region of interest" description="Disordered" evidence="2">
    <location>
        <begin position="1"/>
        <end position="87"/>
    </location>
</feature>
<feature type="compositionally biased region" description="Low complexity" evidence="2">
    <location>
        <begin position="1"/>
        <end position="15"/>
    </location>
</feature>
<feature type="compositionally biased region" description="Polar residues" evidence="2">
    <location>
        <begin position="75"/>
        <end position="87"/>
    </location>
</feature>
<feature type="modified residue" description="Phosphoserine" evidence="6">
    <location>
        <position position="88"/>
    </location>
</feature>
<feature type="modified residue" description="Phosphoserine" evidence="6">
    <location>
        <position position="90"/>
    </location>
</feature>
<feature type="sequence conflict" description="In Ref. 1; AAO61752." evidence="5" ref="1">
    <original>L</original>
    <variation>V</variation>
    <location>
        <position position="279"/>
    </location>
</feature>
<sequence>MDTESTYSGYSYYSSHSKKSHRQGERTRERHKSPRNKDGRGSEKSVTIQAPAGEPLLANDSARTGAEEVQDDNWGETTTAITGTSEHSISQEDIARISKDMEDSVGLDCKRYLGLTVASFLGLLVFLTPIAFILLPQILWREELKPCGAICEGLLISVSFKLLILLIGTWALFFRKQRADVPRVFVFRALLLVLIFLFVVSYWLFYGVRILDSRDQNYKDIVQYAVSLVDALLFIHYLAIVLLELRQLQPMFTLQVVRSTDGESRFYSLGHLSIQRAALVVLENYYKDFTIYNPNLLTASKFRAAKHMAGLKVYNVDGPSNNATGQSRAMIAAAARRRDSSHNELYYEEAEHERRVKKRRARLVVAVEEAFIHIQRLQAEEQQKSPGEVMDPREAAQAIFPSMARALQKYLRTTRQQHYHSMESILQHLAFCITNSMTPKAFLERYLSAGPTLQYDKDRWLSTQWRLISEEAVTNGLRDGIVFVLKCLDFSLVVNVKKIPFIVLSEEFIDPKSHKFVLRLQSETSV</sequence>
<organism>
    <name type="scientific">Mus musculus</name>
    <name type="common">Mouse</name>
    <dbReference type="NCBI Taxonomy" id="10090"/>
    <lineage>
        <taxon>Eukaryota</taxon>
        <taxon>Metazoa</taxon>
        <taxon>Chordata</taxon>
        <taxon>Craniata</taxon>
        <taxon>Vertebrata</taxon>
        <taxon>Euteleostomi</taxon>
        <taxon>Mammalia</taxon>
        <taxon>Eutheria</taxon>
        <taxon>Euarchontoglires</taxon>
        <taxon>Glires</taxon>
        <taxon>Rodentia</taxon>
        <taxon>Myomorpha</taxon>
        <taxon>Muroidea</taxon>
        <taxon>Muridae</taxon>
        <taxon>Murinae</taxon>
        <taxon>Mus</taxon>
        <taxon>Mus</taxon>
    </lineage>
</organism>
<reference key="1">
    <citation type="submission" date="2002-02" db="EMBL/GenBank/DDBJ databases">
        <title>Identification of LPP2, a second Vang-like protein.</title>
        <authorList>
            <person name="Doudney K."/>
            <person name="Paternotte C."/>
            <person name="Murdoch J.N."/>
            <person name="Copp A.J."/>
            <person name="Stanier P."/>
        </authorList>
    </citation>
    <scope>NUCLEOTIDE SEQUENCE [MRNA]</scope>
    <source>
        <strain>C57BL/6J</strain>
    </source>
</reference>
<reference key="2">
    <citation type="submission" date="2005-09" db="EMBL/GenBank/DDBJ databases">
        <authorList>
            <person name="Mural R.J."/>
            <person name="Adams M.D."/>
            <person name="Myers E.W."/>
            <person name="Smith H.O."/>
            <person name="Venter J.C."/>
        </authorList>
    </citation>
    <scope>NUCLEOTIDE SEQUENCE [LARGE SCALE GENOMIC DNA]</scope>
</reference>
<reference key="3">
    <citation type="journal article" date="2004" name="Genome Res.">
        <title>The status, quality, and expansion of the NIH full-length cDNA project: the Mammalian Gene Collection (MGC).</title>
        <authorList>
            <consortium name="The MGC Project Team"/>
        </authorList>
    </citation>
    <scope>NUCLEOTIDE SEQUENCE [LARGE SCALE MRNA]</scope>
    <source>
        <tissue>Mammary cancer</tissue>
    </source>
</reference>
<reference key="4">
    <citation type="journal article" date="2004" name="J. Biol. Chem.">
        <title>Independent mutations in mouse Vangl2 that cause neural tube defects in looptail mice impair interaction with members of the Dishevelled family.</title>
        <authorList>
            <person name="Torban E."/>
            <person name="Wang H.-J."/>
            <person name="Groulx N."/>
            <person name="Gros P."/>
        </authorList>
    </citation>
    <scope>INTERACTION WITH DVL1; DVL2 AND DVL3</scope>
</reference>
<reference key="5">
    <citation type="journal article" date="2010" name="Cell">
        <title>A tissue-specific atlas of mouse protein phosphorylation and expression.</title>
        <authorList>
            <person name="Huttlin E.L."/>
            <person name="Jedrychowski M.P."/>
            <person name="Elias J.E."/>
            <person name="Goswami T."/>
            <person name="Rad R."/>
            <person name="Beausoleil S.A."/>
            <person name="Villen J."/>
            <person name="Haas W."/>
            <person name="Sowa M.E."/>
            <person name="Gygi S.P."/>
        </authorList>
    </citation>
    <scope>PHOSPHORYLATION [LARGE SCALE ANALYSIS] AT SER-88 AND SER-90</scope>
    <scope>IDENTIFICATION BY MASS SPECTROMETRY [LARGE SCALE ANALYSIS]</scope>
    <source>
        <tissue>Kidney</tissue>
        <tissue>Pancreas</tissue>
    </source>
</reference>
<reference key="6">
    <citation type="journal article" date="2012" name="PLoS ONE">
        <title>Molecular characterisation of endogenous Vangl2/Vangl1 heteromeric protein complexes.</title>
        <authorList>
            <person name="Belotti E."/>
            <person name="Puvirajesinghe T.M."/>
            <person name="Audebert S."/>
            <person name="Baudelet E."/>
            <person name="Camoin L."/>
            <person name="Pierres M."/>
            <person name="Lasvaux L."/>
            <person name="Ferracci G."/>
            <person name="Montcouquiol M."/>
            <person name="Borg J.P."/>
        </authorList>
    </citation>
    <scope>SUBCELLULAR LOCATION</scope>
    <scope>SUBUNIT</scope>
</reference>
<dbReference type="EMBL" id="AF481860">
    <property type="protein sequence ID" value="AAO61752.1"/>
    <property type="molecule type" value="mRNA"/>
</dbReference>
<dbReference type="EMBL" id="CH466608">
    <property type="protein sequence ID" value="EDL07618.1"/>
    <property type="molecule type" value="Genomic_DNA"/>
</dbReference>
<dbReference type="EMBL" id="BC138519">
    <property type="protein sequence ID" value="AAI38520.1"/>
    <property type="molecule type" value="mRNA"/>
</dbReference>
<dbReference type="EMBL" id="BC138520">
    <property type="protein sequence ID" value="AAI38521.1"/>
    <property type="molecule type" value="mRNA"/>
</dbReference>
<dbReference type="EMBL" id="BC024687">
    <property type="protein sequence ID" value="AAH24687.1"/>
    <property type="molecule type" value="mRNA"/>
</dbReference>
<dbReference type="CCDS" id="CCDS17686.1"/>
<dbReference type="RefSeq" id="NP_808213.2">
    <property type="nucleotide sequence ID" value="NM_177545.5"/>
</dbReference>
<dbReference type="SMR" id="Q80Z96"/>
<dbReference type="BioGRID" id="230877">
    <property type="interactions" value="14"/>
</dbReference>
<dbReference type="CORUM" id="Q80Z96"/>
<dbReference type="FunCoup" id="Q80Z96">
    <property type="interactions" value="1023"/>
</dbReference>
<dbReference type="IntAct" id="Q80Z96">
    <property type="interactions" value="15"/>
</dbReference>
<dbReference type="MINT" id="Q80Z96"/>
<dbReference type="STRING" id="10090.ENSMUSP00000029453"/>
<dbReference type="iPTMnet" id="Q80Z96"/>
<dbReference type="PhosphoSitePlus" id="Q80Z96"/>
<dbReference type="SwissPalm" id="Q80Z96"/>
<dbReference type="jPOST" id="Q80Z96"/>
<dbReference type="PaxDb" id="10090-ENSMUSP00000125043"/>
<dbReference type="ProteomicsDB" id="297956"/>
<dbReference type="Pumba" id="Q80Z96"/>
<dbReference type="Antibodypedia" id="20174">
    <property type="antibodies" value="188 antibodies from 31 providers"/>
</dbReference>
<dbReference type="DNASU" id="229658"/>
<dbReference type="Ensembl" id="ENSMUST00000029453.13">
    <property type="protein sequence ID" value="ENSMUSP00000029453.8"/>
    <property type="gene ID" value="ENSMUSG00000027860.17"/>
</dbReference>
<dbReference type="GeneID" id="229658"/>
<dbReference type="KEGG" id="mmu:229658"/>
<dbReference type="UCSC" id="uc008qrs.3">
    <property type="organism name" value="mouse"/>
</dbReference>
<dbReference type="AGR" id="MGI:2159344"/>
<dbReference type="CTD" id="81839"/>
<dbReference type="MGI" id="MGI:2159344">
    <property type="gene designation" value="Vangl1"/>
</dbReference>
<dbReference type="VEuPathDB" id="HostDB:ENSMUSG00000027860"/>
<dbReference type="eggNOG" id="KOG3814">
    <property type="taxonomic scope" value="Eukaryota"/>
</dbReference>
<dbReference type="GeneTree" id="ENSGT00390000012496"/>
<dbReference type="HOGENOM" id="CLU_059010_0_0_1"/>
<dbReference type="InParanoid" id="Q80Z96"/>
<dbReference type="OMA" id="HWLSRQW"/>
<dbReference type="OrthoDB" id="8887313at2759"/>
<dbReference type="PhylomeDB" id="Q80Z96"/>
<dbReference type="TreeFam" id="TF313467"/>
<dbReference type="Reactome" id="R-MMU-8980692">
    <property type="pathway name" value="RHOA GTPase cycle"/>
</dbReference>
<dbReference type="Reactome" id="R-MMU-9013026">
    <property type="pathway name" value="RHOB GTPase cycle"/>
</dbReference>
<dbReference type="Reactome" id="R-MMU-9013106">
    <property type="pathway name" value="RHOC GTPase cycle"/>
</dbReference>
<dbReference type="Reactome" id="R-MMU-9013149">
    <property type="pathway name" value="RAC1 GTPase cycle"/>
</dbReference>
<dbReference type="Reactome" id="R-MMU-9013404">
    <property type="pathway name" value="RAC2 GTPase cycle"/>
</dbReference>
<dbReference type="Reactome" id="R-MMU-9013405">
    <property type="pathway name" value="RHOD GTPase cycle"/>
</dbReference>
<dbReference type="Reactome" id="R-MMU-9013406">
    <property type="pathway name" value="RHOQ GTPase cycle"/>
</dbReference>
<dbReference type="Reactome" id="R-MMU-9013407">
    <property type="pathway name" value="RHOH GTPase cycle"/>
</dbReference>
<dbReference type="Reactome" id="R-MMU-9013408">
    <property type="pathway name" value="RHOG GTPase cycle"/>
</dbReference>
<dbReference type="Reactome" id="R-MMU-9013420">
    <property type="pathway name" value="RHOU GTPase cycle"/>
</dbReference>
<dbReference type="Reactome" id="R-MMU-9013423">
    <property type="pathway name" value="RAC3 GTPase cycle"/>
</dbReference>
<dbReference type="Reactome" id="R-MMU-9013424">
    <property type="pathway name" value="RHOV GTPase cycle"/>
</dbReference>
<dbReference type="Reactome" id="R-MMU-9035034">
    <property type="pathway name" value="RHOF GTPase cycle"/>
</dbReference>
<dbReference type="Reactome" id="R-MMU-9696264">
    <property type="pathway name" value="RND3 GTPase cycle"/>
</dbReference>
<dbReference type="Reactome" id="R-MMU-9696270">
    <property type="pathway name" value="RND2 GTPase cycle"/>
</dbReference>
<dbReference type="Reactome" id="R-MMU-9696273">
    <property type="pathway name" value="RND1 GTPase cycle"/>
</dbReference>
<dbReference type="BioGRID-ORCS" id="229658">
    <property type="hits" value="1 hit in 76 CRISPR screens"/>
</dbReference>
<dbReference type="ChiTaRS" id="Vangl1">
    <property type="organism name" value="mouse"/>
</dbReference>
<dbReference type="PRO" id="PR:Q80Z96"/>
<dbReference type="Proteomes" id="UP000000589">
    <property type="component" value="Chromosome 3"/>
</dbReference>
<dbReference type="RNAct" id="Q80Z96">
    <property type="molecule type" value="protein"/>
</dbReference>
<dbReference type="Bgee" id="ENSMUSG00000027860">
    <property type="expression patterns" value="Expressed in yolk sac and 268 other cell types or tissues"/>
</dbReference>
<dbReference type="ExpressionAtlas" id="Q80Z96">
    <property type="expression patterns" value="baseline and differential"/>
</dbReference>
<dbReference type="GO" id="GO:0005576">
    <property type="term" value="C:extracellular region"/>
    <property type="evidence" value="ECO:0007669"/>
    <property type="project" value="GOC"/>
</dbReference>
<dbReference type="GO" id="GO:0016328">
    <property type="term" value="C:lateral plasma membrane"/>
    <property type="evidence" value="ECO:0000314"/>
    <property type="project" value="MGI"/>
</dbReference>
<dbReference type="GO" id="GO:0016020">
    <property type="term" value="C:membrane"/>
    <property type="evidence" value="ECO:0000250"/>
    <property type="project" value="MGI"/>
</dbReference>
<dbReference type="GO" id="GO:0120197">
    <property type="term" value="P:mucociliary clearance"/>
    <property type="evidence" value="ECO:0000315"/>
    <property type="project" value="MGI"/>
</dbReference>
<dbReference type="GO" id="GO:0043473">
    <property type="term" value="P:pigmentation"/>
    <property type="evidence" value="ECO:0000315"/>
    <property type="project" value="MGI"/>
</dbReference>
<dbReference type="InterPro" id="IPR009539">
    <property type="entry name" value="VANGL"/>
</dbReference>
<dbReference type="PANTHER" id="PTHR20886">
    <property type="entry name" value="VANG-LIKE PROTEIN"/>
    <property type="match status" value="1"/>
</dbReference>
<dbReference type="Pfam" id="PF06638">
    <property type="entry name" value="Strabismus"/>
    <property type="match status" value="1"/>
</dbReference>
<dbReference type="PIRSF" id="PIRSF007991">
    <property type="entry name" value="Strabismus"/>
    <property type="match status" value="1"/>
</dbReference>
<name>VANG1_MOUSE</name>